<accession>Q4V8B3</accession>
<feature type="chain" id="PRO_0000305913" description="Mediator of RNA polymerase II transcription subunit 24">
    <location>
        <begin position="1"/>
        <end position="987"/>
    </location>
</feature>
<feature type="short sequence motif" description="LXXLL motif 1">
    <location>
        <begin position="128"/>
        <end position="132"/>
    </location>
</feature>
<feature type="short sequence motif" description="LXXLL motif 2">
    <location>
        <begin position="344"/>
        <end position="348"/>
    </location>
</feature>
<feature type="short sequence motif" description="LXXLL motif 3">
    <location>
        <begin position="446"/>
        <end position="450"/>
    </location>
</feature>
<feature type="short sequence motif" description="LXXLL motif 4">
    <location>
        <begin position="555"/>
        <end position="559"/>
    </location>
</feature>
<feature type="short sequence motif" description="LXXLL motif 5">
    <location>
        <begin position="786"/>
        <end position="790"/>
    </location>
</feature>
<feature type="short sequence motif" description="LXXLL motif 6">
    <location>
        <begin position="855"/>
        <end position="859"/>
    </location>
</feature>
<feature type="modified residue" description="Phosphoserine" evidence="3">
    <location>
        <position position="860"/>
    </location>
</feature>
<feature type="modified residue" description="Phosphoserine" evidence="3">
    <location>
        <position position="871"/>
    </location>
</feature>
<gene>
    <name type="primary">Med24</name>
    <name type="synonym">Thrap4</name>
</gene>
<evidence type="ECO:0000250" key="1"/>
<evidence type="ECO:0000305" key="2"/>
<evidence type="ECO:0007744" key="3">
    <source>
    </source>
</evidence>
<keyword id="KW-0010">Activator</keyword>
<keyword id="KW-0539">Nucleus</keyword>
<keyword id="KW-0597">Phosphoprotein</keyword>
<keyword id="KW-1185">Reference proteome</keyword>
<keyword id="KW-0677">Repeat</keyword>
<keyword id="KW-0804">Transcription</keyword>
<keyword id="KW-0805">Transcription regulation</keyword>
<proteinExistence type="evidence at protein level"/>
<dbReference type="EMBL" id="BC097461">
    <property type="protein sequence ID" value="AAH97461.1"/>
    <property type="molecule type" value="mRNA"/>
</dbReference>
<dbReference type="RefSeq" id="NP_001029251.1">
    <property type="nucleotide sequence ID" value="NM_001034079.1"/>
</dbReference>
<dbReference type="RefSeq" id="XP_063125857.1">
    <property type="nucleotide sequence ID" value="XM_063269787.1"/>
</dbReference>
<dbReference type="RefSeq" id="XP_063125858.1">
    <property type="nucleotide sequence ID" value="XM_063269788.1"/>
</dbReference>
<dbReference type="SMR" id="Q4V8B3"/>
<dbReference type="FunCoup" id="Q4V8B3">
    <property type="interactions" value="2446"/>
</dbReference>
<dbReference type="STRING" id="10116.ENSRNOP00000011947"/>
<dbReference type="iPTMnet" id="Q4V8B3"/>
<dbReference type="PhosphoSitePlus" id="Q4V8B3"/>
<dbReference type="jPOST" id="Q4V8B3"/>
<dbReference type="PaxDb" id="10116-ENSRNOP00000011947"/>
<dbReference type="GeneID" id="619436"/>
<dbReference type="KEGG" id="rno:619436"/>
<dbReference type="UCSC" id="RGD:1564565">
    <property type="organism name" value="rat"/>
</dbReference>
<dbReference type="AGR" id="RGD:1564565"/>
<dbReference type="CTD" id="9862"/>
<dbReference type="RGD" id="1564565">
    <property type="gene designation" value="Med24"/>
</dbReference>
<dbReference type="VEuPathDB" id="HostDB:ENSRNOG00000008711"/>
<dbReference type="eggNOG" id="ENOG502QPJD">
    <property type="taxonomic scope" value="Eukaryota"/>
</dbReference>
<dbReference type="HOGENOM" id="CLU_007484_0_0_1"/>
<dbReference type="InParanoid" id="Q4V8B3"/>
<dbReference type="OrthoDB" id="21216at2759"/>
<dbReference type="Reactome" id="R-RNO-9841922">
    <property type="pathway name" value="MLL4 and MLL3 complexes regulate expression of PPARG target genes in adipogenesis and hepatic steatosis"/>
</dbReference>
<dbReference type="PRO" id="PR:Q4V8B3"/>
<dbReference type="Proteomes" id="UP000002494">
    <property type="component" value="Chromosome 10"/>
</dbReference>
<dbReference type="Bgee" id="ENSRNOG00000008711">
    <property type="expression patterns" value="Expressed in skeletal muscle tissue and 20 other cell types or tissues"/>
</dbReference>
<dbReference type="GO" id="GO:0070847">
    <property type="term" value="C:core mediator complex"/>
    <property type="evidence" value="ECO:0000266"/>
    <property type="project" value="RGD"/>
</dbReference>
<dbReference type="GO" id="GO:0016592">
    <property type="term" value="C:mediator complex"/>
    <property type="evidence" value="ECO:0000266"/>
    <property type="project" value="RGD"/>
</dbReference>
<dbReference type="GO" id="GO:0005634">
    <property type="term" value="C:nucleus"/>
    <property type="evidence" value="ECO:0000266"/>
    <property type="project" value="RGD"/>
</dbReference>
<dbReference type="GO" id="GO:0000151">
    <property type="term" value="C:ubiquitin ligase complex"/>
    <property type="evidence" value="ECO:0000314"/>
    <property type="project" value="RGD"/>
</dbReference>
<dbReference type="GO" id="GO:0004402">
    <property type="term" value="F:histone acetyltransferase activity"/>
    <property type="evidence" value="ECO:0000314"/>
    <property type="project" value="RGD"/>
</dbReference>
<dbReference type="GO" id="GO:0046966">
    <property type="term" value="F:nuclear thyroid hormone receptor binding"/>
    <property type="evidence" value="ECO:0000266"/>
    <property type="project" value="RGD"/>
</dbReference>
<dbReference type="GO" id="GO:0044877">
    <property type="term" value="F:protein-containing complex binding"/>
    <property type="evidence" value="ECO:0000314"/>
    <property type="project" value="RGD"/>
</dbReference>
<dbReference type="GO" id="GO:0003713">
    <property type="term" value="F:transcription coactivator activity"/>
    <property type="evidence" value="ECO:0000314"/>
    <property type="project" value="RGD"/>
</dbReference>
<dbReference type="GO" id="GO:0003712">
    <property type="term" value="F:transcription coregulator activity"/>
    <property type="evidence" value="ECO:0000266"/>
    <property type="project" value="RGD"/>
</dbReference>
<dbReference type="GO" id="GO:0045893">
    <property type="term" value="P:positive regulation of DNA-templated transcription"/>
    <property type="evidence" value="ECO:0000266"/>
    <property type="project" value="RGD"/>
</dbReference>
<dbReference type="GO" id="GO:0060261">
    <property type="term" value="P:positive regulation of transcription initiation by RNA polymerase II"/>
    <property type="evidence" value="ECO:0000266"/>
    <property type="project" value="RGD"/>
</dbReference>
<dbReference type="GO" id="GO:0016567">
    <property type="term" value="P:protein ubiquitination"/>
    <property type="evidence" value="ECO:0000314"/>
    <property type="project" value="RGD"/>
</dbReference>
<dbReference type="GO" id="GO:0035019">
    <property type="term" value="P:somatic stem cell population maintenance"/>
    <property type="evidence" value="ECO:0000266"/>
    <property type="project" value="RGD"/>
</dbReference>
<dbReference type="GO" id="GO:0006366">
    <property type="term" value="P:transcription by RNA polymerase II"/>
    <property type="evidence" value="ECO:0000266"/>
    <property type="project" value="RGD"/>
</dbReference>
<dbReference type="InterPro" id="IPR021429">
    <property type="entry name" value="Mediator_Med24"/>
</dbReference>
<dbReference type="PANTHER" id="PTHR12898">
    <property type="entry name" value="MEDIATOR OF RNA POLYMERASE II TRANSCRIPTION SUBUNIT 24"/>
    <property type="match status" value="1"/>
</dbReference>
<dbReference type="PANTHER" id="PTHR12898:SF1">
    <property type="entry name" value="MEDIATOR OF RNA POLYMERASE II TRANSCRIPTION SUBUNIT 24"/>
    <property type="match status" value="1"/>
</dbReference>
<dbReference type="Pfam" id="PF11277">
    <property type="entry name" value="Med24_N"/>
    <property type="match status" value="1"/>
</dbReference>
<name>MED24_RAT</name>
<sequence length="987" mass="110081">MKVVNLKQAILQAWKERWSDYQWAINMKKFFPKGATWDILNLAEALLEQAMIGPSPNPLILSYLKYAISSQMVSYSSVLTAISKFDDFSRDLCVQALLDIMDMFCDRLSCHGKAEECIGLCRALLSALHWLLRCTAASAERLQEGLEAGSAVTGEKQLALCLQCLEKTLSSTKNRALLHIAKLEEASSWTAIEHCLLKLGEILANLSNPQLRSQAEHCGTLIRSIPTMLSVHSEQLHKTGFPTIHALILLEGTMNLTGEMQPLVEQLMMVKRMQHIPTPLFVLEIWKACFVGLIESPEGTQELKWTAFTYLKIPQVLVKLKKYFHGDKDFTEDVNCAFEFLLKLTPLLDKADQRCNCDCTNFLLQECNKQGLLSEASFASLVSKRTADRDPQLKSSENANIQPNPGLILRAEPTVTNILKTMDADHSKSPEGLLGVLGHMLSGKSLDLLLAAAAATGKLKSFARKFINLNEFTTHGSGESTKTASVRALLFDISFLMLCHVAQTYGSEVILSESSSGEEVPFFETWMQTCMPEEGKILNPDHPCFRPDSTKVESLVALLNNSSEMKLVQMKWHEACLSISAAILEILNAWENGVLAFESIQKITDNIKGKVCSLAVCAVAWLVAHVRMLGLDEREKSLQMIRQLAGPLYSENTLQFYNERVVIMNSILEHMCADVLQQTATQIKFPSTGVDTMPYWNLLPPKRPIKEVLTDIFAKVLEKGWVDSRSIHILDTLLHMGGVYWFCNNLIKELLKETRKEHTLRAVQLLYSIFCLDMQQVTLVLLGHILPGLLTDSSKWHSLMDPPGTALAKLAVWCALSSYSSHKGQASSRQKKRHREDIEDYISLFPVEDMQPSKLMRLLSSNEDDASILSSPTDRSMNSSLSASQLHTVNMRDPLNRVLANLFLLISSVLGSRTAGPHTQFVQWFMEECVDCLEQDSRGSILQFMPFTTVSELVKVSAMSSPKVVLAITDLSLPLGRQVAAKAIAAL</sequence>
<organism>
    <name type="scientific">Rattus norvegicus</name>
    <name type="common">Rat</name>
    <dbReference type="NCBI Taxonomy" id="10116"/>
    <lineage>
        <taxon>Eukaryota</taxon>
        <taxon>Metazoa</taxon>
        <taxon>Chordata</taxon>
        <taxon>Craniata</taxon>
        <taxon>Vertebrata</taxon>
        <taxon>Euteleostomi</taxon>
        <taxon>Mammalia</taxon>
        <taxon>Eutheria</taxon>
        <taxon>Euarchontoglires</taxon>
        <taxon>Glires</taxon>
        <taxon>Rodentia</taxon>
        <taxon>Myomorpha</taxon>
        <taxon>Muroidea</taxon>
        <taxon>Muridae</taxon>
        <taxon>Murinae</taxon>
        <taxon>Rattus</taxon>
    </lineage>
</organism>
<protein>
    <recommendedName>
        <fullName>Mediator of RNA polymerase II transcription subunit 24</fullName>
    </recommendedName>
    <alternativeName>
        <fullName>Mediator complex subunit 24</fullName>
    </alternativeName>
    <alternativeName>
        <fullName>Thyroid hormone receptor-associated protein 4</fullName>
    </alternativeName>
</protein>
<reference key="1">
    <citation type="journal article" date="2004" name="Genome Res.">
        <title>The status, quality, and expansion of the NIH full-length cDNA project: the Mammalian Gene Collection (MGC).</title>
        <authorList>
            <consortium name="The MGC Project Team"/>
        </authorList>
    </citation>
    <scope>NUCLEOTIDE SEQUENCE [LARGE SCALE MRNA]</scope>
    <source>
        <tissue>Testis</tissue>
    </source>
</reference>
<reference key="2">
    <citation type="journal article" date="2012" name="Nat. Commun.">
        <title>Quantitative maps of protein phosphorylation sites across 14 different rat organs and tissues.</title>
        <authorList>
            <person name="Lundby A."/>
            <person name="Secher A."/>
            <person name="Lage K."/>
            <person name="Nordsborg N.B."/>
            <person name="Dmytriyev A."/>
            <person name="Lundby C."/>
            <person name="Olsen J.V."/>
        </authorList>
    </citation>
    <scope>PHOSPHORYLATION [LARGE SCALE ANALYSIS] AT SER-860 AND SER-871</scope>
    <scope>IDENTIFICATION BY MASS SPECTROMETRY [LARGE SCALE ANALYSIS]</scope>
</reference>
<comment type="function">
    <text evidence="1">Component of the Mediator complex, a coactivator involved in the regulated transcription of nearly all RNA polymerase II-dependent genes. Mediator functions as a bridge to convey information from gene-specific regulatory proteins to the basal RNA polymerase II transcription machinery. Mediator is recruited to promoters by direct interactions with regulatory proteins and serves as a scaffold for the assembly of a functional preinitiation complex with RNA polymerase II and the general transcription factors (By similarity).</text>
</comment>
<comment type="subunit">
    <text evidence="1">Component of the Mediator complex, which is composed of MED1, MED4, MED6, MED7, MED8, MED9, MED10, MED11, MED12, MED13, MED13L, MED14, MED15, MED16, MED17, MED18, MED19, MED20, MED21, MED22, MED23, MED24, MED25, MED26, MED27, MED29, MED30, MED31, CCNC, CDK8 and CDC2L6/CDK11. The MED12, MED13, CCNC and CDK8 subunits form a distinct module termed the CDK8 module. Mediator containing the CDK8 module is less active than Mediator lacking this module in supporting transcriptional activation. Individual preparations of the Mediator complex lacking one or more distinct subunits have been variously termed ARC, CRSP, DRIP, PC2, SMCC and TRAP. Interacts with AR (By similarity).</text>
</comment>
<comment type="subcellular location">
    <subcellularLocation>
        <location evidence="2">Nucleus</location>
    </subcellularLocation>
</comment>
<comment type="similarity">
    <text evidence="2">Belongs to the Mediator complex subunit 24 family.</text>
</comment>